<reference key="1">
    <citation type="journal article" date="2005" name="Nature">
        <title>The genome of the social amoeba Dictyostelium discoideum.</title>
        <authorList>
            <person name="Eichinger L."/>
            <person name="Pachebat J.A."/>
            <person name="Gloeckner G."/>
            <person name="Rajandream M.A."/>
            <person name="Sucgang R."/>
            <person name="Berriman M."/>
            <person name="Song J."/>
            <person name="Olsen R."/>
            <person name="Szafranski K."/>
            <person name="Xu Q."/>
            <person name="Tunggal B."/>
            <person name="Kummerfeld S."/>
            <person name="Madera M."/>
            <person name="Konfortov B.A."/>
            <person name="Rivero F."/>
            <person name="Bankier A.T."/>
            <person name="Lehmann R."/>
            <person name="Hamlin N."/>
            <person name="Davies R."/>
            <person name="Gaudet P."/>
            <person name="Fey P."/>
            <person name="Pilcher K."/>
            <person name="Chen G."/>
            <person name="Saunders D."/>
            <person name="Sodergren E.J."/>
            <person name="Davis P."/>
            <person name="Kerhornou A."/>
            <person name="Nie X."/>
            <person name="Hall N."/>
            <person name="Anjard C."/>
            <person name="Hemphill L."/>
            <person name="Bason N."/>
            <person name="Farbrother P."/>
            <person name="Desany B."/>
            <person name="Just E."/>
            <person name="Morio T."/>
            <person name="Rost R."/>
            <person name="Churcher C.M."/>
            <person name="Cooper J."/>
            <person name="Haydock S."/>
            <person name="van Driessche N."/>
            <person name="Cronin A."/>
            <person name="Goodhead I."/>
            <person name="Muzny D.M."/>
            <person name="Mourier T."/>
            <person name="Pain A."/>
            <person name="Lu M."/>
            <person name="Harper D."/>
            <person name="Lindsay R."/>
            <person name="Hauser H."/>
            <person name="James K.D."/>
            <person name="Quiles M."/>
            <person name="Madan Babu M."/>
            <person name="Saito T."/>
            <person name="Buchrieser C."/>
            <person name="Wardroper A."/>
            <person name="Felder M."/>
            <person name="Thangavelu M."/>
            <person name="Johnson D."/>
            <person name="Knights A."/>
            <person name="Loulseged H."/>
            <person name="Mungall K.L."/>
            <person name="Oliver K."/>
            <person name="Price C."/>
            <person name="Quail M.A."/>
            <person name="Urushihara H."/>
            <person name="Hernandez J."/>
            <person name="Rabbinowitsch E."/>
            <person name="Steffen D."/>
            <person name="Sanders M."/>
            <person name="Ma J."/>
            <person name="Kohara Y."/>
            <person name="Sharp S."/>
            <person name="Simmonds M.N."/>
            <person name="Spiegler S."/>
            <person name="Tivey A."/>
            <person name="Sugano S."/>
            <person name="White B."/>
            <person name="Walker D."/>
            <person name="Woodward J.R."/>
            <person name="Winckler T."/>
            <person name="Tanaka Y."/>
            <person name="Shaulsky G."/>
            <person name="Schleicher M."/>
            <person name="Weinstock G.M."/>
            <person name="Rosenthal A."/>
            <person name="Cox E.C."/>
            <person name="Chisholm R.L."/>
            <person name="Gibbs R.A."/>
            <person name="Loomis W.F."/>
            <person name="Platzer M."/>
            <person name="Kay R.R."/>
            <person name="Williams J.G."/>
            <person name="Dear P.H."/>
            <person name="Noegel A.A."/>
            <person name="Barrell B.G."/>
            <person name="Kuspa A."/>
        </authorList>
    </citation>
    <scope>NUCLEOTIDE SEQUENCE [LARGE SCALE GENOMIC DNA]</scope>
    <source>
        <strain>AX4</strain>
    </source>
</reference>
<keyword id="KW-0349">Heme</keyword>
<keyword id="KW-0408">Iron</keyword>
<keyword id="KW-0472">Membrane</keyword>
<keyword id="KW-0479">Metal-binding</keyword>
<keyword id="KW-0503">Monooxygenase</keyword>
<keyword id="KW-0560">Oxidoreductase</keyword>
<keyword id="KW-1185">Reference proteome</keyword>
<keyword id="KW-0812">Transmembrane</keyword>
<keyword id="KW-1133">Transmembrane helix</keyword>
<evidence type="ECO:0000250" key="1"/>
<evidence type="ECO:0000255" key="2"/>
<evidence type="ECO:0000305" key="3"/>
<proteinExistence type="inferred from homology"/>
<accession>Q54D38</accession>
<comment type="cofactor">
    <cofactor evidence="1">
        <name>heme</name>
        <dbReference type="ChEBI" id="CHEBI:30413"/>
    </cofactor>
</comment>
<comment type="subcellular location">
    <subcellularLocation>
        <location evidence="3">Membrane</location>
        <topology evidence="3">Single-pass membrane protein</topology>
    </subcellularLocation>
</comment>
<comment type="similarity">
    <text evidence="3">Belongs to the cytochrome P450 family.</text>
</comment>
<feature type="chain" id="PRO_0000318837" description="Probable cytochrome P450 520A1">
    <location>
        <begin position="1"/>
        <end position="536"/>
    </location>
</feature>
<feature type="transmembrane region" description="Helical" evidence="2">
    <location>
        <begin position="1"/>
        <end position="21"/>
    </location>
</feature>
<feature type="binding site" description="axial binding residue" evidence="1">
    <location>
        <position position="479"/>
    </location>
    <ligand>
        <name>heme</name>
        <dbReference type="ChEBI" id="CHEBI:30413"/>
    </ligand>
    <ligandPart>
        <name>Fe</name>
        <dbReference type="ChEBI" id="CHEBI:18248"/>
    </ligandPart>
</feature>
<gene>
    <name type="primary">cyp520A1</name>
    <name type="ORF">DDB_G0292496</name>
</gene>
<protein>
    <recommendedName>
        <fullName>Probable cytochrome P450 520A1</fullName>
        <ecNumber>1.14.-.-</ecNumber>
    </recommendedName>
</protein>
<dbReference type="EC" id="1.14.-.-"/>
<dbReference type="EMBL" id="AAFI02000190">
    <property type="protein sequence ID" value="EAL61227.1"/>
    <property type="molecule type" value="Genomic_DNA"/>
</dbReference>
<dbReference type="RefSeq" id="XP_629658.1">
    <property type="nucleotide sequence ID" value="XM_629656.1"/>
</dbReference>
<dbReference type="SMR" id="Q54D38"/>
<dbReference type="STRING" id="44689.Q54D38"/>
<dbReference type="PaxDb" id="44689-DDB0233029"/>
<dbReference type="EnsemblProtists" id="EAL61227">
    <property type="protein sequence ID" value="EAL61227"/>
    <property type="gene ID" value="DDB_G0292496"/>
</dbReference>
<dbReference type="GeneID" id="8628722"/>
<dbReference type="KEGG" id="ddi:DDB_G0292496"/>
<dbReference type="dictyBase" id="DDB_G0292496">
    <property type="gene designation" value="cyp520A1"/>
</dbReference>
<dbReference type="VEuPathDB" id="AmoebaDB:DDB_G0292496"/>
<dbReference type="eggNOG" id="KOG0156">
    <property type="taxonomic scope" value="Eukaryota"/>
</dbReference>
<dbReference type="HOGENOM" id="CLU_001570_4_0_1"/>
<dbReference type="InParanoid" id="Q54D38"/>
<dbReference type="OMA" id="KPFDTMQ"/>
<dbReference type="PhylomeDB" id="Q54D38"/>
<dbReference type="PRO" id="PR:Q54D38"/>
<dbReference type="Proteomes" id="UP000002195">
    <property type="component" value="Chromosome 6"/>
</dbReference>
<dbReference type="GO" id="GO:0016020">
    <property type="term" value="C:membrane"/>
    <property type="evidence" value="ECO:0007669"/>
    <property type="project" value="UniProtKB-SubCell"/>
</dbReference>
<dbReference type="GO" id="GO:0020037">
    <property type="term" value="F:heme binding"/>
    <property type="evidence" value="ECO:0007669"/>
    <property type="project" value="InterPro"/>
</dbReference>
<dbReference type="GO" id="GO:0005506">
    <property type="term" value="F:iron ion binding"/>
    <property type="evidence" value="ECO:0007669"/>
    <property type="project" value="InterPro"/>
</dbReference>
<dbReference type="GO" id="GO:0004497">
    <property type="term" value="F:monooxygenase activity"/>
    <property type="evidence" value="ECO:0007669"/>
    <property type="project" value="UniProtKB-KW"/>
</dbReference>
<dbReference type="GO" id="GO:0016705">
    <property type="term" value="F:oxidoreductase activity, acting on paired donors, with incorporation or reduction of molecular oxygen"/>
    <property type="evidence" value="ECO:0007669"/>
    <property type="project" value="InterPro"/>
</dbReference>
<dbReference type="CDD" id="cd20617">
    <property type="entry name" value="CYP1_2-like"/>
    <property type="match status" value="1"/>
</dbReference>
<dbReference type="Gene3D" id="1.10.630.10">
    <property type="entry name" value="Cytochrome P450"/>
    <property type="match status" value="1"/>
</dbReference>
<dbReference type="InterPro" id="IPR001128">
    <property type="entry name" value="Cyt_P450"/>
</dbReference>
<dbReference type="InterPro" id="IPR017972">
    <property type="entry name" value="Cyt_P450_CS"/>
</dbReference>
<dbReference type="InterPro" id="IPR002401">
    <property type="entry name" value="Cyt_P450_E_grp-I"/>
</dbReference>
<dbReference type="InterPro" id="IPR036396">
    <property type="entry name" value="Cyt_P450_sf"/>
</dbReference>
<dbReference type="PANTHER" id="PTHR24289">
    <property type="entry name" value="STEROID 17-ALPHA-HYDROXYLASE/17,20 LYASE"/>
    <property type="match status" value="1"/>
</dbReference>
<dbReference type="PANTHER" id="PTHR24289:SF1">
    <property type="entry name" value="STEROID 17-ALPHA-HYDROXYLASE_17,20 LYASE"/>
    <property type="match status" value="1"/>
</dbReference>
<dbReference type="Pfam" id="PF00067">
    <property type="entry name" value="p450"/>
    <property type="match status" value="1"/>
</dbReference>
<dbReference type="PRINTS" id="PR00463">
    <property type="entry name" value="EP450I"/>
</dbReference>
<dbReference type="PRINTS" id="PR00385">
    <property type="entry name" value="P450"/>
</dbReference>
<dbReference type="SUPFAM" id="SSF48264">
    <property type="entry name" value="Cytochrome P450"/>
    <property type="match status" value="1"/>
</dbReference>
<dbReference type="PROSITE" id="PS00086">
    <property type="entry name" value="CYTOCHROME_P450"/>
    <property type="match status" value="1"/>
</dbReference>
<organism>
    <name type="scientific">Dictyostelium discoideum</name>
    <name type="common">Social amoeba</name>
    <dbReference type="NCBI Taxonomy" id="44689"/>
    <lineage>
        <taxon>Eukaryota</taxon>
        <taxon>Amoebozoa</taxon>
        <taxon>Evosea</taxon>
        <taxon>Eumycetozoa</taxon>
        <taxon>Dictyostelia</taxon>
        <taxon>Dictyosteliales</taxon>
        <taxon>Dictyosteliaceae</taxon>
        <taxon>Dictyostelium</taxon>
    </lineage>
</organism>
<sequence length="536" mass="62136">MEILTFIIYLITFFILFDFYKKNKRYSKSPNKEANGPWSLPIIGGLHLIGDRPNRSFSELSKIYGGIYKIWLAERMLMIVTDPEIIQDIWIKQHDKFVNRPHNITSQIFSLNHKSLVFGDVDEWNKVRPKMTCHFTKIKLNSTKPKQIVNDQLKKMLKIMTTHSLDSKPFNQYVYLNTYSMNIILGLMLSIELPHSNSNDKDGQFSKVLHSIDEIFKSIGTNGPEDIFPTLLPFFKNRISTFTNHLNVIKDFIRSIYKQQIKTFDINIEPRNIMDCLISEYYEDDDQEDEVAKQELIIQLCIDMLVAATDTSASTLEWFMLFMINNPNLQEDLYEEVVNVVGKDCPYVTFDDVPKLALIKACYFEILRIRPVTSLSLPRVSMEDTTTLNDIFIPKDTIIIQNIFGMGNSEKFVSNPTVFNPSRWLEYKKMKDLNQFGNRDDSIDTTNTTTNTTLNGTTSKYYNDLERVSIPFGVGKRRCMAPSMADHNVLIAMANIVLNFTMKSSDPKQMPLSEEEQYAITIKPKYPFKVLFEKRS</sequence>
<name>C520A_DICDI</name>